<gene>
    <name type="primary">CEBPG</name>
</gene>
<reference key="1">
    <citation type="journal article" date="1995" name="Gene">
        <title>Cloning of the cDNA encoding human C/EBP gamma, a protein binding to the PRE-I enhancer element of the human interleukin-4 promoter.</title>
        <authorList>
            <person name="Davydov I.V."/>
            <person name="Bohmann D."/>
            <person name="Krammer P.H."/>
            <person name="Li-Weber M."/>
        </authorList>
    </citation>
    <scope>NUCLEOTIDE SEQUENCE [MRNA]</scope>
    <scope>FUNCTION</scope>
    <source>
        <tissue>T-cell</tissue>
    </source>
</reference>
<reference key="2">
    <citation type="journal article" date="2004" name="Nat. Genet.">
        <title>Complete sequencing and characterization of 21,243 full-length human cDNAs.</title>
        <authorList>
            <person name="Ota T."/>
            <person name="Suzuki Y."/>
            <person name="Nishikawa T."/>
            <person name="Otsuki T."/>
            <person name="Sugiyama T."/>
            <person name="Irie R."/>
            <person name="Wakamatsu A."/>
            <person name="Hayashi K."/>
            <person name="Sato H."/>
            <person name="Nagai K."/>
            <person name="Kimura K."/>
            <person name="Makita H."/>
            <person name="Sekine M."/>
            <person name="Obayashi M."/>
            <person name="Nishi T."/>
            <person name="Shibahara T."/>
            <person name="Tanaka T."/>
            <person name="Ishii S."/>
            <person name="Yamamoto J."/>
            <person name="Saito K."/>
            <person name="Kawai Y."/>
            <person name="Isono Y."/>
            <person name="Nakamura Y."/>
            <person name="Nagahari K."/>
            <person name="Murakami K."/>
            <person name="Yasuda T."/>
            <person name="Iwayanagi T."/>
            <person name="Wagatsuma M."/>
            <person name="Shiratori A."/>
            <person name="Sudo H."/>
            <person name="Hosoiri T."/>
            <person name="Kaku Y."/>
            <person name="Kodaira H."/>
            <person name="Kondo H."/>
            <person name="Sugawara M."/>
            <person name="Takahashi M."/>
            <person name="Kanda K."/>
            <person name="Yokoi T."/>
            <person name="Furuya T."/>
            <person name="Kikkawa E."/>
            <person name="Omura Y."/>
            <person name="Abe K."/>
            <person name="Kamihara K."/>
            <person name="Katsuta N."/>
            <person name="Sato K."/>
            <person name="Tanikawa M."/>
            <person name="Yamazaki M."/>
            <person name="Ninomiya K."/>
            <person name="Ishibashi T."/>
            <person name="Yamashita H."/>
            <person name="Murakawa K."/>
            <person name="Fujimori K."/>
            <person name="Tanai H."/>
            <person name="Kimata M."/>
            <person name="Watanabe M."/>
            <person name="Hiraoka S."/>
            <person name="Chiba Y."/>
            <person name="Ishida S."/>
            <person name="Ono Y."/>
            <person name="Takiguchi S."/>
            <person name="Watanabe S."/>
            <person name="Yosida M."/>
            <person name="Hotuta T."/>
            <person name="Kusano J."/>
            <person name="Kanehori K."/>
            <person name="Takahashi-Fujii A."/>
            <person name="Hara H."/>
            <person name="Tanase T.-O."/>
            <person name="Nomura Y."/>
            <person name="Togiya S."/>
            <person name="Komai F."/>
            <person name="Hara R."/>
            <person name="Takeuchi K."/>
            <person name="Arita M."/>
            <person name="Imose N."/>
            <person name="Musashino K."/>
            <person name="Yuuki H."/>
            <person name="Oshima A."/>
            <person name="Sasaki N."/>
            <person name="Aotsuka S."/>
            <person name="Yoshikawa Y."/>
            <person name="Matsunawa H."/>
            <person name="Ichihara T."/>
            <person name="Shiohata N."/>
            <person name="Sano S."/>
            <person name="Moriya S."/>
            <person name="Momiyama H."/>
            <person name="Satoh N."/>
            <person name="Takami S."/>
            <person name="Terashima Y."/>
            <person name="Suzuki O."/>
            <person name="Nakagawa S."/>
            <person name="Senoh A."/>
            <person name="Mizoguchi H."/>
            <person name="Goto Y."/>
            <person name="Shimizu F."/>
            <person name="Wakebe H."/>
            <person name="Hishigaki H."/>
            <person name="Watanabe T."/>
            <person name="Sugiyama A."/>
            <person name="Takemoto M."/>
            <person name="Kawakami B."/>
            <person name="Yamazaki M."/>
            <person name="Watanabe K."/>
            <person name="Kumagai A."/>
            <person name="Itakura S."/>
            <person name="Fukuzumi Y."/>
            <person name="Fujimori Y."/>
            <person name="Komiyama M."/>
            <person name="Tashiro H."/>
            <person name="Tanigami A."/>
            <person name="Fujiwara T."/>
            <person name="Ono T."/>
            <person name="Yamada K."/>
            <person name="Fujii Y."/>
            <person name="Ozaki K."/>
            <person name="Hirao M."/>
            <person name="Ohmori Y."/>
            <person name="Kawabata A."/>
            <person name="Hikiji T."/>
            <person name="Kobatake N."/>
            <person name="Inagaki H."/>
            <person name="Ikema Y."/>
            <person name="Okamoto S."/>
            <person name="Okitani R."/>
            <person name="Kawakami T."/>
            <person name="Noguchi S."/>
            <person name="Itoh T."/>
            <person name="Shigeta K."/>
            <person name="Senba T."/>
            <person name="Matsumura K."/>
            <person name="Nakajima Y."/>
            <person name="Mizuno T."/>
            <person name="Morinaga M."/>
            <person name="Sasaki M."/>
            <person name="Togashi T."/>
            <person name="Oyama M."/>
            <person name="Hata H."/>
            <person name="Watanabe M."/>
            <person name="Komatsu T."/>
            <person name="Mizushima-Sugano J."/>
            <person name="Satoh T."/>
            <person name="Shirai Y."/>
            <person name="Takahashi Y."/>
            <person name="Nakagawa K."/>
            <person name="Okumura K."/>
            <person name="Nagase T."/>
            <person name="Nomura N."/>
            <person name="Kikuchi H."/>
            <person name="Masuho Y."/>
            <person name="Yamashita R."/>
            <person name="Nakai K."/>
            <person name="Yada T."/>
            <person name="Nakamura Y."/>
            <person name="Ohara O."/>
            <person name="Isogai T."/>
            <person name="Sugano S."/>
        </authorList>
    </citation>
    <scope>NUCLEOTIDE SEQUENCE [LARGE SCALE MRNA]</scope>
    <source>
        <tissue>Trachea</tissue>
    </source>
</reference>
<reference key="3">
    <citation type="submission" date="2003-05" db="EMBL/GenBank/DDBJ databases">
        <title>Cloning of human full-length CDSs in BD Creator(TM) system donor vector.</title>
        <authorList>
            <person name="Kalnine N."/>
            <person name="Chen X."/>
            <person name="Rolfs A."/>
            <person name="Halleck A."/>
            <person name="Hines L."/>
            <person name="Eisenstein S."/>
            <person name="Koundinya M."/>
            <person name="Raphael J."/>
            <person name="Moreira D."/>
            <person name="Kelley T."/>
            <person name="LaBaer J."/>
            <person name="Lin Y."/>
            <person name="Phelan M."/>
            <person name="Farmer A."/>
        </authorList>
    </citation>
    <scope>NUCLEOTIDE SEQUENCE [LARGE SCALE MRNA]</scope>
</reference>
<reference key="4">
    <citation type="journal article" date="2004" name="Genome Res.">
        <title>The status, quality, and expansion of the NIH full-length cDNA project: the Mammalian Gene Collection (MGC).</title>
        <authorList>
            <consortium name="The MGC Project Team"/>
        </authorList>
    </citation>
    <scope>NUCLEOTIDE SEQUENCE [LARGE SCALE MRNA]</scope>
    <source>
        <tissue>Placenta</tissue>
    </source>
</reference>
<reference key="5">
    <citation type="journal article" date="2010" name="Sci. Signal.">
        <title>Quantitative phosphoproteomics reveals widespread full phosphorylation site occupancy during mitosis.</title>
        <authorList>
            <person name="Olsen J.V."/>
            <person name="Vermeulen M."/>
            <person name="Santamaria A."/>
            <person name="Kumar C."/>
            <person name="Miller M.L."/>
            <person name="Jensen L.J."/>
            <person name="Gnad F."/>
            <person name="Cox J."/>
            <person name="Jensen T.S."/>
            <person name="Nigg E.A."/>
            <person name="Brunak S."/>
            <person name="Mann M."/>
        </authorList>
    </citation>
    <scope>IDENTIFICATION BY MASS SPECTROMETRY [LARGE SCALE ANALYSIS]</scope>
    <source>
        <tissue>Cervix carcinoma</tissue>
    </source>
</reference>
<reference key="6">
    <citation type="journal article" date="2017" name="Nat. Struct. Mol. Biol.">
        <title>Site-specific mapping of the human SUMO proteome reveals co-modification with phosphorylation.</title>
        <authorList>
            <person name="Hendriks I.A."/>
            <person name="Lyon D."/>
            <person name="Young C."/>
            <person name="Jensen L.J."/>
            <person name="Vertegaal A.C."/>
            <person name="Nielsen M.L."/>
        </authorList>
    </citation>
    <scope>SUMOYLATION [LARGE SCALE ANALYSIS] AT LYS-3</scope>
    <scope>IDENTIFICATION BY MASS SPECTROMETRY [LARGE SCALE ANALYSIS]</scope>
</reference>
<dbReference type="EMBL" id="U20240">
    <property type="protein sequence ID" value="AAC50201.1"/>
    <property type="molecule type" value="mRNA"/>
</dbReference>
<dbReference type="EMBL" id="AK313634">
    <property type="protein sequence ID" value="BAG36393.1"/>
    <property type="molecule type" value="mRNA"/>
</dbReference>
<dbReference type="EMBL" id="BT019819">
    <property type="protein sequence ID" value="AAV38622.1"/>
    <property type="molecule type" value="mRNA"/>
</dbReference>
<dbReference type="EMBL" id="BT019820">
    <property type="protein sequence ID" value="AAV38623.1"/>
    <property type="molecule type" value="mRNA"/>
</dbReference>
<dbReference type="EMBL" id="BC007582">
    <property type="protein sequence ID" value="AAH07582.1"/>
    <property type="molecule type" value="mRNA"/>
</dbReference>
<dbReference type="EMBL" id="BC013128">
    <property type="protein sequence ID" value="AAH13128.1"/>
    <property type="molecule type" value="mRNA"/>
</dbReference>
<dbReference type="CCDS" id="CCDS12432.1"/>
<dbReference type="PIR" id="JC4243">
    <property type="entry name" value="JC4243"/>
</dbReference>
<dbReference type="RefSeq" id="NP_001239225.1">
    <property type="nucleotide sequence ID" value="NM_001252296.2"/>
</dbReference>
<dbReference type="RefSeq" id="NP_001797.1">
    <property type="nucleotide sequence ID" value="NM_001806.4"/>
</dbReference>
<dbReference type="SMR" id="P53567"/>
<dbReference type="BioGRID" id="107483">
    <property type="interactions" value="59"/>
</dbReference>
<dbReference type="ComplexPortal" id="CPX-516">
    <property type="entry name" value="bZIP transcription factor complex, CEBPG-CEBPG"/>
</dbReference>
<dbReference type="ComplexPortal" id="CPX-6527">
    <property type="entry name" value="bZIP transcription factor complex, ATF4-CEBPG"/>
</dbReference>
<dbReference type="ComplexPortal" id="CPX-6588">
    <property type="entry name" value="bZIP transcription factor complex, ATF5-CEBPG"/>
</dbReference>
<dbReference type="ComplexPortal" id="CPX-6782">
    <property type="entry name" value="bZIP transcription factor complex, ATF7-CEBPG"/>
</dbReference>
<dbReference type="ComplexPortal" id="CPX-7008">
    <property type="entry name" value="bZIP transcription factor complex, BATF-CEBPG"/>
</dbReference>
<dbReference type="ComplexPortal" id="CPX-7066">
    <property type="entry name" value="bZIP transcription factor complex, BATF2-CEBPG"/>
</dbReference>
<dbReference type="ComplexPortal" id="CPX-7097">
    <property type="entry name" value="bZIP transcription factor complex, BATF3-CEBPG"/>
</dbReference>
<dbReference type="FunCoup" id="P53567">
    <property type="interactions" value="3490"/>
</dbReference>
<dbReference type="IntAct" id="P53567">
    <property type="interactions" value="43"/>
</dbReference>
<dbReference type="MINT" id="P53567"/>
<dbReference type="STRING" id="9606.ENSP00000466022"/>
<dbReference type="iPTMnet" id="P53567"/>
<dbReference type="PhosphoSitePlus" id="P53567"/>
<dbReference type="BioMuta" id="CEBPG"/>
<dbReference type="DMDM" id="1705750"/>
<dbReference type="jPOST" id="P53567"/>
<dbReference type="MassIVE" id="P53567"/>
<dbReference type="PaxDb" id="9606-ENSP00000284000"/>
<dbReference type="PeptideAtlas" id="P53567"/>
<dbReference type="ProteomicsDB" id="56585"/>
<dbReference type="Pumba" id="P53567"/>
<dbReference type="Antibodypedia" id="1652">
    <property type="antibodies" value="374 antibodies from 34 providers"/>
</dbReference>
<dbReference type="DNASU" id="1054"/>
<dbReference type="Ensembl" id="ENST00000284000.9">
    <property type="protein sequence ID" value="ENSP00000284000.2"/>
    <property type="gene ID" value="ENSG00000153879.9"/>
</dbReference>
<dbReference type="Ensembl" id="ENST00000585933.2">
    <property type="protein sequence ID" value="ENSP00000466022.2"/>
    <property type="gene ID" value="ENSG00000153879.9"/>
</dbReference>
<dbReference type="Ensembl" id="ENST00000652630.1">
    <property type="protein sequence ID" value="ENSP00000499062.1"/>
    <property type="gene ID" value="ENSG00000153879.9"/>
</dbReference>
<dbReference type="GeneID" id="1054"/>
<dbReference type="KEGG" id="hsa:1054"/>
<dbReference type="MANE-Select" id="ENST00000284000.9">
    <property type="protein sequence ID" value="ENSP00000284000.2"/>
    <property type="RefSeq nucleotide sequence ID" value="NM_001806.4"/>
    <property type="RefSeq protein sequence ID" value="NP_001797.1"/>
</dbReference>
<dbReference type="UCSC" id="uc002nup.4">
    <property type="organism name" value="human"/>
</dbReference>
<dbReference type="AGR" id="HGNC:1837"/>
<dbReference type="CTD" id="1054"/>
<dbReference type="DisGeNET" id="1054"/>
<dbReference type="GeneCards" id="CEBPG"/>
<dbReference type="HGNC" id="HGNC:1837">
    <property type="gene designation" value="CEBPG"/>
</dbReference>
<dbReference type="HPA" id="ENSG00000153879">
    <property type="expression patterns" value="Low tissue specificity"/>
</dbReference>
<dbReference type="MalaCards" id="CEBPG"/>
<dbReference type="MIM" id="138972">
    <property type="type" value="gene"/>
</dbReference>
<dbReference type="neXtProt" id="NX_P53567"/>
<dbReference type="OpenTargets" id="ENSG00000153879"/>
<dbReference type="PharmGKB" id="PA26380"/>
<dbReference type="VEuPathDB" id="HostDB:ENSG00000153879"/>
<dbReference type="eggNOG" id="KOG3119">
    <property type="taxonomic scope" value="Eukaryota"/>
</dbReference>
<dbReference type="GeneTree" id="ENSGT00940000160676"/>
<dbReference type="HOGENOM" id="CLU_146813_0_0_1"/>
<dbReference type="InParanoid" id="P53567"/>
<dbReference type="OMA" id="HAHNFAD"/>
<dbReference type="OrthoDB" id="10039716at2759"/>
<dbReference type="PAN-GO" id="P53567">
    <property type="GO annotations" value="3 GO annotations based on evolutionary models"/>
</dbReference>
<dbReference type="PhylomeDB" id="P53567"/>
<dbReference type="TreeFam" id="TF105009"/>
<dbReference type="PathwayCommons" id="P53567"/>
<dbReference type="Reactome" id="R-HSA-380994">
    <property type="pathway name" value="ATF4 activates genes in response to endoplasmic reticulum stress"/>
</dbReference>
<dbReference type="Reactome" id="R-HSA-9633012">
    <property type="pathway name" value="Response of EIF2AK4 (GCN2) to amino acid deficiency"/>
</dbReference>
<dbReference type="Reactome" id="R-HSA-9648895">
    <property type="pathway name" value="Response of EIF2AK1 (HRI) to heme deficiency"/>
</dbReference>
<dbReference type="SignaLink" id="P53567"/>
<dbReference type="SIGNOR" id="P53567"/>
<dbReference type="BioGRID-ORCS" id="1054">
    <property type="hits" value="14 hits in 1172 CRISPR screens"/>
</dbReference>
<dbReference type="ChiTaRS" id="CEBPG">
    <property type="organism name" value="human"/>
</dbReference>
<dbReference type="GeneWiki" id="CEBPG"/>
<dbReference type="GenomeRNAi" id="1054"/>
<dbReference type="Pharos" id="P53567">
    <property type="development level" value="Tbio"/>
</dbReference>
<dbReference type="PRO" id="PR:P53567"/>
<dbReference type="Proteomes" id="UP000005640">
    <property type="component" value="Chromosome 19"/>
</dbReference>
<dbReference type="RNAct" id="P53567">
    <property type="molecule type" value="protein"/>
</dbReference>
<dbReference type="Bgee" id="ENSG00000153879">
    <property type="expression patterns" value="Expressed in secondary oocyte and 198 other cell types or tissues"/>
</dbReference>
<dbReference type="GO" id="GO:0000785">
    <property type="term" value="C:chromatin"/>
    <property type="evidence" value="ECO:0000247"/>
    <property type="project" value="NTNU_SB"/>
</dbReference>
<dbReference type="GO" id="GO:0005654">
    <property type="term" value="C:nucleoplasm"/>
    <property type="evidence" value="ECO:0000314"/>
    <property type="project" value="HPA"/>
</dbReference>
<dbReference type="GO" id="GO:0005634">
    <property type="term" value="C:nucleus"/>
    <property type="evidence" value="ECO:0000250"/>
    <property type="project" value="UniProtKB"/>
</dbReference>
<dbReference type="GO" id="GO:0090575">
    <property type="term" value="C:RNA polymerase II transcription regulator complex"/>
    <property type="evidence" value="ECO:0000353"/>
    <property type="project" value="ComplexPortal"/>
</dbReference>
<dbReference type="GO" id="GO:0003677">
    <property type="term" value="F:DNA binding"/>
    <property type="evidence" value="ECO:0000314"/>
    <property type="project" value="UniProtKB"/>
</dbReference>
<dbReference type="GO" id="GO:0001228">
    <property type="term" value="F:DNA-binding transcription activator activity, RNA polymerase II-specific"/>
    <property type="evidence" value="ECO:0000314"/>
    <property type="project" value="NTNU_SB"/>
</dbReference>
<dbReference type="GO" id="GO:0000981">
    <property type="term" value="F:DNA-binding transcription factor activity, RNA polymerase II-specific"/>
    <property type="evidence" value="ECO:0000247"/>
    <property type="project" value="NTNU_SB"/>
</dbReference>
<dbReference type="GO" id="GO:0140297">
    <property type="term" value="F:DNA-binding transcription factor binding"/>
    <property type="evidence" value="ECO:0000314"/>
    <property type="project" value="UniProtKB"/>
</dbReference>
<dbReference type="GO" id="GO:0042802">
    <property type="term" value="F:identical protein binding"/>
    <property type="evidence" value="ECO:0007669"/>
    <property type="project" value="Ensembl"/>
</dbReference>
<dbReference type="GO" id="GO:0000978">
    <property type="term" value="F:RNA polymerase II cis-regulatory region sequence-specific DNA binding"/>
    <property type="evidence" value="ECO:0000318"/>
    <property type="project" value="GO_Central"/>
</dbReference>
<dbReference type="GO" id="GO:0043565">
    <property type="term" value="F:sequence-specific DNA binding"/>
    <property type="evidence" value="ECO:0000314"/>
    <property type="project" value="UniProtKB"/>
</dbReference>
<dbReference type="GO" id="GO:1990837">
    <property type="term" value="F:sequence-specific double-stranded DNA binding"/>
    <property type="evidence" value="ECO:0000314"/>
    <property type="project" value="ARUK-UCL"/>
</dbReference>
<dbReference type="GO" id="GO:0030183">
    <property type="term" value="P:B cell differentiation"/>
    <property type="evidence" value="ECO:0000250"/>
    <property type="project" value="UniProtKB"/>
</dbReference>
<dbReference type="GO" id="GO:0006351">
    <property type="term" value="P:DNA-templated transcription"/>
    <property type="evidence" value="ECO:0007669"/>
    <property type="project" value="InterPro"/>
</dbReference>
<dbReference type="GO" id="GO:0043353">
    <property type="term" value="P:enucleate erythrocyte differentiation"/>
    <property type="evidence" value="ECO:0000250"/>
    <property type="project" value="UniProtKB"/>
</dbReference>
<dbReference type="GO" id="GO:0006955">
    <property type="term" value="P:immune response"/>
    <property type="evidence" value="ECO:0000250"/>
    <property type="project" value="UniProtKB"/>
</dbReference>
<dbReference type="GO" id="GO:0140467">
    <property type="term" value="P:integrated stress response signaling"/>
    <property type="evidence" value="ECO:0000303"/>
    <property type="project" value="ComplexPortal"/>
</dbReference>
<dbReference type="GO" id="GO:0001889">
    <property type="term" value="P:liver development"/>
    <property type="evidence" value="ECO:0000250"/>
    <property type="project" value="UniProtKB"/>
</dbReference>
<dbReference type="GO" id="GO:0016071">
    <property type="term" value="P:mRNA metabolic process"/>
    <property type="evidence" value="ECO:0007669"/>
    <property type="project" value="Ensembl"/>
</dbReference>
<dbReference type="GO" id="GO:0042267">
    <property type="term" value="P:natural killer cell mediated cytotoxicity"/>
    <property type="evidence" value="ECO:0000250"/>
    <property type="project" value="UniProtKB"/>
</dbReference>
<dbReference type="GO" id="GO:0043433">
    <property type="term" value="P:negative regulation of DNA-binding transcription factor activity"/>
    <property type="evidence" value="ECO:0000250"/>
    <property type="project" value="UniProtKB"/>
</dbReference>
<dbReference type="GO" id="GO:0043388">
    <property type="term" value="P:positive regulation of DNA binding"/>
    <property type="evidence" value="ECO:0000304"/>
    <property type="project" value="UniProtKB"/>
</dbReference>
<dbReference type="GO" id="GO:0045739">
    <property type="term" value="P:positive regulation of DNA repair"/>
    <property type="evidence" value="ECO:0000270"/>
    <property type="project" value="UniProtKB"/>
</dbReference>
<dbReference type="GO" id="GO:0051091">
    <property type="term" value="P:positive regulation of DNA-binding transcription factor activity"/>
    <property type="evidence" value="ECO:0000304"/>
    <property type="project" value="UniProtKB"/>
</dbReference>
<dbReference type="GO" id="GO:0045944">
    <property type="term" value="P:positive regulation of transcription by RNA polymerase II"/>
    <property type="evidence" value="ECO:0000314"/>
    <property type="project" value="NTNU_SB"/>
</dbReference>
<dbReference type="GO" id="GO:0032729">
    <property type="term" value="P:positive regulation of type II interferon production"/>
    <property type="evidence" value="ECO:0000250"/>
    <property type="project" value="UniProtKB"/>
</dbReference>
<dbReference type="GO" id="GO:0006357">
    <property type="term" value="P:regulation of transcription by RNA polymerase II"/>
    <property type="evidence" value="ECO:0000314"/>
    <property type="project" value="MGI"/>
</dbReference>
<dbReference type="CDD" id="cd14713">
    <property type="entry name" value="bZIP_CEBPG"/>
    <property type="match status" value="1"/>
</dbReference>
<dbReference type="FunFam" id="1.20.5.170:FF:000055">
    <property type="entry name" value="CCAAT/enhancer-binding protein gamma"/>
    <property type="match status" value="1"/>
</dbReference>
<dbReference type="Gene3D" id="1.20.5.170">
    <property type="match status" value="1"/>
</dbReference>
<dbReference type="InterPro" id="IPR004827">
    <property type="entry name" value="bZIP"/>
</dbReference>
<dbReference type="InterPro" id="IPR046347">
    <property type="entry name" value="bZIP_sf"/>
</dbReference>
<dbReference type="InterPro" id="IPR031106">
    <property type="entry name" value="C/EBP"/>
</dbReference>
<dbReference type="PANTHER" id="PTHR23334">
    <property type="entry name" value="CCAAT/ENHANCER BINDING PROTEIN"/>
    <property type="match status" value="1"/>
</dbReference>
<dbReference type="PANTHER" id="PTHR23334:SF69">
    <property type="entry name" value="CCAAT_ENHANCER-BINDING PROTEIN GAMMA"/>
    <property type="match status" value="1"/>
</dbReference>
<dbReference type="Pfam" id="PF07716">
    <property type="entry name" value="bZIP_2"/>
    <property type="match status" value="1"/>
</dbReference>
<dbReference type="SMART" id="SM00338">
    <property type="entry name" value="BRLZ"/>
    <property type="match status" value="1"/>
</dbReference>
<dbReference type="SUPFAM" id="SSF57959">
    <property type="entry name" value="Leucine zipper domain"/>
    <property type="match status" value="1"/>
</dbReference>
<dbReference type="PROSITE" id="PS50217">
    <property type="entry name" value="BZIP"/>
    <property type="match status" value="1"/>
</dbReference>
<sequence>MSKISQQNSTPGVNGISVIHTQAHASGLQQVPQLVPAGPGGGGKAVAPSKQSKKSSPMDRNSDEYRQRRERNNMAVKKSRLKSKQKAQDTLQRVNQLKEENERLEAKIKLLTKELSVLKDLFLEHAHNLADNVQSISTENTTADGDNAGQ</sequence>
<protein>
    <recommendedName>
        <fullName>CCAAT/enhancer-binding protein gamma</fullName>
        <shortName>C/EBP gamma</shortName>
    </recommendedName>
</protein>
<accession>P53567</accession>
<accession>B2R946</accession>
<accession>Q5U052</accession>
<feature type="chain" id="PRO_0000076628" description="CCAAT/enhancer-binding protein gamma">
    <location>
        <begin position="1"/>
        <end position="150"/>
    </location>
</feature>
<feature type="domain" description="bZIP" evidence="3">
    <location>
        <begin position="62"/>
        <end position="125"/>
    </location>
</feature>
<feature type="region of interest" description="Disordered" evidence="4">
    <location>
        <begin position="27"/>
        <end position="94"/>
    </location>
</feature>
<feature type="region of interest" description="Basic motif" evidence="3">
    <location>
        <begin position="66"/>
        <end position="93"/>
    </location>
</feature>
<feature type="region of interest" description="Leucine-zipper" evidence="3">
    <location>
        <begin position="97"/>
        <end position="118"/>
    </location>
</feature>
<feature type="compositionally biased region" description="Low complexity" evidence="4">
    <location>
        <begin position="28"/>
        <end position="37"/>
    </location>
</feature>
<feature type="compositionally biased region" description="Basic and acidic residues" evidence="4">
    <location>
        <begin position="56"/>
        <end position="72"/>
    </location>
</feature>
<feature type="cross-link" description="Glycyl lysine isopeptide (Lys-Gly) (interchain with G-Cter in SUMO2)" evidence="7">
    <location>
        <position position="3"/>
    </location>
</feature>
<proteinExistence type="evidence at protein level"/>
<name>CEBPG_HUMAN</name>
<keyword id="KW-0010">Activator</keyword>
<keyword id="KW-0238">DNA-binding</keyword>
<keyword id="KW-1017">Isopeptide bond</keyword>
<keyword id="KW-0539">Nucleus</keyword>
<keyword id="KW-1267">Proteomics identification</keyword>
<keyword id="KW-1185">Reference proteome</keyword>
<keyword id="KW-0804">Transcription</keyword>
<keyword id="KW-0805">Transcription regulation</keyword>
<keyword id="KW-0832">Ubl conjugation</keyword>
<comment type="function">
    <text evidence="1 2 5">Transcription factor that binds to the promoter and the enhancer regions of target genes. Binds to the enhancer element PRE-I (positive regulatory element-I) of the IL-4 gene (PubMed:7665092). Binds to the promoter and the enhancer of the immunoglobulin heavy chain. Binds to GPE1, a cis-acting element in the G-CSF gene promoter.</text>
</comment>
<comment type="subunit">
    <text evidence="1 2">Binds DNA as a dimer and can form stable heterodimers with CEBPA and CEBPB. Interacts with ZNF638; this interaction increases transcriptional activation.</text>
</comment>
<comment type="interaction">
    <interactant intactId="EBI-740209">
        <id>P53567</id>
    </interactant>
    <interactant intactId="EBI-1170906">
        <id>P15336</id>
        <label>ATF2</label>
    </interactant>
    <organismsDiffer>false</organismsDiffer>
    <experiments>3</experiments>
</comment>
<comment type="interaction">
    <interactant intactId="EBI-740209">
        <id>P53567</id>
    </interactant>
    <interactant intactId="EBI-712767">
        <id>P18847</id>
        <label>ATF3</label>
    </interactant>
    <organismsDiffer>false</organismsDiffer>
    <experiments>5</experiments>
</comment>
<comment type="interaction">
    <interactant intactId="EBI-740209">
        <id>P53567</id>
    </interactant>
    <interactant intactId="EBI-492498">
        <id>P18848</id>
        <label>ATF4</label>
    </interactant>
    <organismsDiffer>false</organismsDiffer>
    <experiments>16</experiments>
</comment>
<comment type="interaction">
    <interactant intactId="EBI-740209">
        <id>P53567</id>
    </interactant>
    <interactant intactId="EBI-492509">
        <id>Q9Y2D1</id>
        <label>ATF5</label>
    </interactant>
    <organismsDiffer>false</organismsDiffer>
    <experiments>8</experiments>
</comment>
<comment type="interaction">
    <interactant intactId="EBI-740209">
        <id>P53567</id>
    </interactant>
    <interactant intactId="EBI-765623">
        <id>P17544</id>
        <label>ATF7</label>
    </interactant>
    <organismsDiffer>false</organismsDiffer>
    <experiments>2</experiments>
</comment>
<comment type="interaction">
    <interactant intactId="EBI-740209">
        <id>P53567</id>
    </interactant>
    <interactant intactId="EBI-749503">
        <id>Q16520</id>
        <label>BATF</label>
    </interactant>
    <organismsDiffer>false</organismsDiffer>
    <experiments>4</experiments>
</comment>
<comment type="interaction">
    <interactant intactId="EBI-740209">
        <id>P53567</id>
    </interactant>
    <interactant intactId="EBI-742695">
        <id>Q8N1L9</id>
        <label>BATF2</label>
    </interactant>
    <organismsDiffer>false</organismsDiffer>
    <experiments>2</experiments>
</comment>
<comment type="interaction">
    <interactant intactId="EBI-740209">
        <id>P53567</id>
    </interactant>
    <interactant intactId="EBI-10312707">
        <id>Q9NR55</id>
        <label>BATF3</label>
    </interactant>
    <organismsDiffer>false</organismsDiffer>
    <experiments>3</experiments>
</comment>
<comment type="interaction">
    <interactant intactId="EBI-740209">
        <id>P53567</id>
    </interactant>
    <interactant intactId="EBI-1172054">
        <id>P49715</id>
        <label>CEBPA</label>
    </interactant>
    <organismsDiffer>false</organismsDiffer>
    <experiments>4</experiments>
</comment>
<comment type="interaction">
    <interactant intactId="EBI-740209">
        <id>P53567</id>
    </interactant>
    <interactant intactId="EBI-969696">
        <id>P17676</id>
        <label>CEBPB</label>
    </interactant>
    <organismsDiffer>false</organismsDiffer>
    <experiments>2</experiments>
</comment>
<comment type="interaction">
    <interactant intactId="EBI-740209">
        <id>P53567</id>
    </interactant>
    <interactant intactId="EBI-7962058">
        <id>P49716</id>
        <label>CEBPD</label>
    </interactant>
    <organismsDiffer>false</organismsDiffer>
    <experiments>2</experiments>
</comment>
<comment type="interaction">
    <interactant intactId="EBI-740209">
        <id>P53567</id>
    </interactant>
    <interactant intactId="EBI-3907048">
        <id>Q15744</id>
        <label>CEBPE</label>
    </interactant>
    <organismsDiffer>false</organismsDiffer>
    <experiments>2</experiments>
</comment>
<comment type="interaction">
    <interactant intactId="EBI-740209">
        <id>P53567</id>
    </interactant>
    <interactant intactId="EBI-742651">
        <id>P35638</id>
        <label>DDIT3</label>
    </interactant>
    <organismsDiffer>false</organismsDiffer>
    <experiments>7</experiments>
</comment>
<comment type="interaction">
    <interactant intactId="EBI-740209">
        <id>P53567</id>
    </interactant>
    <interactant intactId="EBI-10173632">
        <id>P35638-2</id>
        <label>DDIT3</label>
    </interactant>
    <organismsDiffer>false</organismsDiffer>
    <experiments>3</experiments>
</comment>
<comment type="interaction">
    <interactant intactId="EBI-740209">
        <id>P53567</id>
    </interactant>
    <interactant intactId="EBI-852851">
        <id>P01100</id>
        <label>FOS</label>
    </interactant>
    <organismsDiffer>false</organismsDiffer>
    <experiments>2</experiments>
</comment>
<comment type="interaction">
    <interactant intactId="EBI-740209">
        <id>P53567</id>
    </interactant>
    <interactant intactId="EBI-852823">
        <id>P05412</id>
        <label>JUN</label>
    </interactant>
    <organismsDiffer>false</organismsDiffer>
    <experiments>2</experiments>
</comment>
<comment type="interaction">
    <interactant intactId="EBI-740209">
        <id>P53567</id>
    </interactant>
    <interactant intactId="EBI-740216">
        <id>P55198</id>
        <label>MLLT6</label>
    </interactant>
    <organismsDiffer>false</organismsDiffer>
    <experiments>3</experiments>
</comment>
<comment type="interaction">
    <interactant intactId="EBI-740209">
        <id>P53567</id>
    </interactant>
    <interactant intactId="EBI-2007911">
        <id>Q16236</id>
        <label>NFE2L2</label>
    </interactant>
    <organismsDiffer>false</organismsDiffer>
    <experiments>5</experiments>
</comment>
<comment type="interaction">
    <interactant intactId="EBI-740209">
        <id>P53567</id>
    </interactant>
    <interactant intactId="EBI-356973">
        <id>O15212</id>
        <label>PFDN6</label>
    </interactant>
    <organismsDiffer>false</organismsDiffer>
    <experiments>3</experiments>
</comment>
<comment type="interaction">
    <interactant intactId="EBI-740209">
        <id>P53567</id>
    </interactant>
    <interactant intactId="EBI-10890294">
        <id>P0C746</id>
        <label>HBZ</label>
    </interactant>
    <organismsDiffer>true</organismsDiffer>
    <experiments>2</experiments>
</comment>
<comment type="subcellular location">
    <subcellularLocation>
        <location evidence="2">Nucleus</location>
    </subcellularLocation>
</comment>
<comment type="similarity">
    <text evidence="6">Belongs to the bZIP family. C/EBP subfamily.</text>
</comment>
<organism>
    <name type="scientific">Homo sapiens</name>
    <name type="common">Human</name>
    <dbReference type="NCBI Taxonomy" id="9606"/>
    <lineage>
        <taxon>Eukaryota</taxon>
        <taxon>Metazoa</taxon>
        <taxon>Chordata</taxon>
        <taxon>Craniata</taxon>
        <taxon>Vertebrata</taxon>
        <taxon>Euteleostomi</taxon>
        <taxon>Mammalia</taxon>
        <taxon>Eutheria</taxon>
        <taxon>Euarchontoglires</taxon>
        <taxon>Primates</taxon>
        <taxon>Haplorrhini</taxon>
        <taxon>Catarrhini</taxon>
        <taxon>Hominidae</taxon>
        <taxon>Homo</taxon>
    </lineage>
</organism>
<evidence type="ECO:0000250" key="1">
    <source>
        <dbReference type="UniProtKB" id="P26801"/>
    </source>
</evidence>
<evidence type="ECO:0000250" key="2">
    <source>
        <dbReference type="UniProtKB" id="P53568"/>
    </source>
</evidence>
<evidence type="ECO:0000255" key="3">
    <source>
        <dbReference type="PROSITE-ProRule" id="PRU00978"/>
    </source>
</evidence>
<evidence type="ECO:0000256" key="4">
    <source>
        <dbReference type="SAM" id="MobiDB-lite"/>
    </source>
</evidence>
<evidence type="ECO:0000269" key="5">
    <source>
    </source>
</evidence>
<evidence type="ECO:0000305" key="6"/>
<evidence type="ECO:0007744" key="7">
    <source>
    </source>
</evidence>